<evidence type="ECO:0000255" key="1">
    <source>
        <dbReference type="HAMAP-Rule" id="MF_00354"/>
    </source>
</evidence>
<reference key="1">
    <citation type="journal article" date="2009" name="Proc. Natl. Acad. Sci. U.S.A.">
        <title>Biogeography of the Sulfolobus islandicus pan-genome.</title>
        <authorList>
            <person name="Reno M.L."/>
            <person name="Held N.L."/>
            <person name="Fields C.J."/>
            <person name="Burke P.V."/>
            <person name="Whitaker R.J."/>
        </authorList>
    </citation>
    <scope>NUCLEOTIDE SEQUENCE [LARGE SCALE GENOMIC DNA]</scope>
    <source>
        <strain>M.16.4 / Kamchatka #3</strain>
    </source>
</reference>
<accession>C4KJA2</accession>
<comment type="function">
    <text evidence="1">Involved in the biosynthesis of isoprenoids. Catalyzes the 1,3-allylic rearrangement of the homoallylic substrate isopentenyl (IPP) to its allylic isomer, dimethylallyl diphosphate (DMAPP).</text>
</comment>
<comment type="catalytic activity">
    <reaction evidence="1">
        <text>isopentenyl diphosphate = dimethylallyl diphosphate</text>
        <dbReference type="Rhea" id="RHEA:23284"/>
        <dbReference type="ChEBI" id="CHEBI:57623"/>
        <dbReference type="ChEBI" id="CHEBI:128769"/>
        <dbReference type="EC" id="5.3.3.2"/>
    </reaction>
</comment>
<comment type="cofactor">
    <cofactor evidence="1">
        <name>FMN</name>
        <dbReference type="ChEBI" id="CHEBI:58210"/>
    </cofactor>
</comment>
<comment type="cofactor">
    <cofactor evidence="1">
        <name>NADPH</name>
        <dbReference type="ChEBI" id="CHEBI:57783"/>
    </cofactor>
</comment>
<comment type="cofactor">
    <cofactor evidence="1">
        <name>Mg(2+)</name>
        <dbReference type="ChEBI" id="CHEBI:18420"/>
    </cofactor>
</comment>
<comment type="subunit">
    <text evidence="1">Homooctamer. Dimer of tetramers.</text>
</comment>
<comment type="subcellular location">
    <subcellularLocation>
        <location evidence="1">Cytoplasm</location>
    </subcellularLocation>
</comment>
<comment type="similarity">
    <text evidence="1">Belongs to the IPP isomerase type 2 family.</text>
</comment>
<organism>
    <name type="scientific">Saccharolobus islandicus (strain M.16.4 / Kamchatka #3)</name>
    <name type="common">Sulfolobus islandicus</name>
    <dbReference type="NCBI Taxonomy" id="426118"/>
    <lineage>
        <taxon>Archaea</taxon>
        <taxon>Thermoproteota</taxon>
        <taxon>Thermoprotei</taxon>
        <taxon>Sulfolobales</taxon>
        <taxon>Sulfolobaceae</taxon>
        <taxon>Saccharolobus</taxon>
    </lineage>
</organism>
<dbReference type="EC" id="5.3.3.2" evidence="1"/>
<dbReference type="EMBL" id="CP001402">
    <property type="protein sequence ID" value="ACR42666.1"/>
    <property type="molecule type" value="Genomic_DNA"/>
</dbReference>
<dbReference type="RefSeq" id="WP_012712024.1">
    <property type="nucleotide sequence ID" value="NC_012726.1"/>
</dbReference>
<dbReference type="SMR" id="C4KJA2"/>
<dbReference type="GeneID" id="15298444"/>
<dbReference type="GeneID" id="84062367"/>
<dbReference type="KEGG" id="sid:M164_2064"/>
<dbReference type="HOGENOM" id="CLU_065515_1_0_2"/>
<dbReference type="Proteomes" id="UP000001479">
    <property type="component" value="Chromosome"/>
</dbReference>
<dbReference type="GO" id="GO:0005737">
    <property type="term" value="C:cytoplasm"/>
    <property type="evidence" value="ECO:0007669"/>
    <property type="project" value="UniProtKB-SubCell"/>
</dbReference>
<dbReference type="GO" id="GO:0010181">
    <property type="term" value="F:FMN binding"/>
    <property type="evidence" value="ECO:0007669"/>
    <property type="project" value="UniProtKB-UniRule"/>
</dbReference>
<dbReference type="GO" id="GO:0004452">
    <property type="term" value="F:isopentenyl-diphosphate delta-isomerase activity"/>
    <property type="evidence" value="ECO:0007669"/>
    <property type="project" value="UniProtKB-UniRule"/>
</dbReference>
<dbReference type="GO" id="GO:0000287">
    <property type="term" value="F:magnesium ion binding"/>
    <property type="evidence" value="ECO:0007669"/>
    <property type="project" value="UniProtKB-UniRule"/>
</dbReference>
<dbReference type="GO" id="GO:0070402">
    <property type="term" value="F:NADPH binding"/>
    <property type="evidence" value="ECO:0007669"/>
    <property type="project" value="UniProtKB-UniRule"/>
</dbReference>
<dbReference type="GO" id="GO:0016491">
    <property type="term" value="F:oxidoreductase activity"/>
    <property type="evidence" value="ECO:0007669"/>
    <property type="project" value="InterPro"/>
</dbReference>
<dbReference type="GO" id="GO:0008299">
    <property type="term" value="P:isoprenoid biosynthetic process"/>
    <property type="evidence" value="ECO:0007669"/>
    <property type="project" value="UniProtKB-UniRule"/>
</dbReference>
<dbReference type="CDD" id="cd02811">
    <property type="entry name" value="IDI-2_FMN"/>
    <property type="match status" value="1"/>
</dbReference>
<dbReference type="FunFam" id="3.20.20.70:FF:000258">
    <property type="entry name" value="Isopentenyl-diphosphate delta-isomerase"/>
    <property type="match status" value="1"/>
</dbReference>
<dbReference type="Gene3D" id="3.20.20.70">
    <property type="entry name" value="Aldolase class I"/>
    <property type="match status" value="1"/>
</dbReference>
<dbReference type="HAMAP" id="MF_00354">
    <property type="entry name" value="Idi_2"/>
    <property type="match status" value="1"/>
</dbReference>
<dbReference type="InterPro" id="IPR013785">
    <property type="entry name" value="Aldolase_TIM"/>
</dbReference>
<dbReference type="InterPro" id="IPR000262">
    <property type="entry name" value="FMN-dep_DH"/>
</dbReference>
<dbReference type="InterPro" id="IPR011179">
    <property type="entry name" value="IPdP_isomerase"/>
</dbReference>
<dbReference type="NCBIfam" id="TIGR02151">
    <property type="entry name" value="IPP_isom_2"/>
    <property type="match status" value="1"/>
</dbReference>
<dbReference type="PANTHER" id="PTHR43665">
    <property type="entry name" value="ISOPENTENYL-DIPHOSPHATE DELTA-ISOMERASE"/>
    <property type="match status" value="1"/>
</dbReference>
<dbReference type="PANTHER" id="PTHR43665:SF1">
    <property type="entry name" value="ISOPENTENYL-DIPHOSPHATE DELTA-ISOMERASE"/>
    <property type="match status" value="1"/>
</dbReference>
<dbReference type="Pfam" id="PF01070">
    <property type="entry name" value="FMN_dh"/>
    <property type="match status" value="1"/>
</dbReference>
<dbReference type="PIRSF" id="PIRSF003314">
    <property type="entry name" value="IPP_isomerase"/>
    <property type="match status" value="1"/>
</dbReference>
<dbReference type="SMART" id="SM01240">
    <property type="entry name" value="IMPDH"/>
    <property type="match status" value="1"/>
</dbReference>
<dbReference type="SUPFAM" id="SSF51395">
    <property type="entry name" value="FMN-linked oxidoreductases"/>
    <property type="match status" value="1"/>
</dbReference>
<gene>
    <name evidence="1" type="primary">fni</name>
    <name type="ordered locus">M164_2064</name>
</gene>
<proteinExistence type="inferred from homology"/>
<feature type="chain" id="PRO_1000205354" description="Isopentenyl-diphosphate delta-isomerase">
    <location>
        <begin position="1"/>
        <end position="368"/>
    </location>
</feature>
<feature type="binding site" evidence="1">
    <location>
        <begin position="7"/>
        <end position="8"/>
    </location>
    <ligand>
        <name>substrate</name>
    </ligand>
</feature>
<feature type="binding site" evidence="1">
    <location>
        <position position="65"/>
    </location>
    <ligand>
        <name>FMN</name>
        <dbReference type="ChEBI" id="CHEBI:58210"/>
    </ligand>
</feature>
<feature type="binding site" evidence="1">
    <location>
        <begin position="66"/>
        <end position="68"/>
    </location>
    <ligand>
        <name>FMN</name>
        <dbReference type="ChEBI" id="CHEBI:58210"/>
    </ligand>
</feature>
<feature type="binding site" evidence="1">
    <location>
        <begin position="96"/>
        <end position="98"/>
    </location>
    <ligand>
        <name>substrate</name>
    </ligand>
</feature>
<feature type="binding site" evidence="1">
    <location>
        <position position="96"/>
    </location>
    <ligand>
        <name>FMN</name>
        <dbReference type="ChEBI" id="CHEBI:58210"/>
    </ligand>
</feature>
<feature type="binding site" evidence="1">
    <location>
        <position position="125"/>
    </location>
    <ligand>
        <name>FMN</name>
        <dbReference type="ChEBI" id="CHEBI:58210"/>
    </ligand>
</feature>
<feature type="binding site" evidence="1">
    <location>
        <position position="160"/>
    </location>
    <ligand>
        <name>substrate</name>
    </ligand>
</feature>
<feature type="binding site" evidence="1">
    <location>
        <position position="161"/>
    </location>
    <ligand>
        <name>Mg(2+)</name>
        <dbReference type="ChEBI" id="CHEBI:18420"/>
    </ligand>
</feature>
<feature type="binding site" evidence="1">
    <location>
        <position position="193"/>
    </location>
    <ligand>
        <name>FMN</name>
        <dbReference type="ChEBI" id="CHEBI:58210"/>
    </ligand>
</feature>
<feature type="binding site" evidence="1">
    <location>
        <position position="218"/>
    </location>
    <ligand>
        <name>FMN</name>
        <dbReference type="ChEBI" id="CHEBI:58210"/>
    </ligand>
</feature>
<feature type="binding site" evidence="1">
    <location>
        <position position="223"/>
    </location>
    <ligand>
        <name>FMN</name>
        <dbReference type="ChEBI" id="CHEBI:58210"/>
    </ligand>
</feature>
<feature type="binding site" evidence="1">
    <location>
        <begin position="275"/>
        <end position="277"/>
    </location>
    <ligand>
        <name>FMN</name>
        <dbReference type="ChEBI" id="CHEBI:58210"/>
    </ligand>
</feature>
<feature type="binding site" evidence="1">
    <location>
        <begin position="296"/>
        <end position="297"/>
    </location>
    <ligand>
        <name>FMN</name>
        <dbReference type="ChEBI" id="CHEBI:58210"/>
    </ligand>
</feature>
<protein>
    <recommendedName>
        <fullName evidence="1">Isopentenyl-diphosphate delta-isomerase</fullName>
        <shortName evidence="1">IPP isomerase</shortName>
        <ecNumber evidence="1">5.3.3.2</ecNumber>
    </recommendedName>
    <alternativeName>
        <fullName evidence="1">Isopentenyl diphosphate:dimethylallyl diphosphate isomerase</fullName>
    </alternativeName>
    <alternativeName>
        <fullName evidence="1">Isopentenyl pyrophosphate isomerase</fullName>
    </alternativeName>
    <alternativeName>
        <fullName evidence="1">Type 2 isopentenyl diphosphate isomerase</fullName>
        <shortName evidence="1">IDI-2</shortName>
    </alternativeName>
</protein>
<keyword id="KW-0963">Cytoplasm</keyword>
<keyword id="KW-0285">Flavoprotein</keyword>
<keyword id="KW-0288">FMN</keyword>
<keyword id="KW-0413">Isomerase</keyword>
<keyword id="KW-0414">Isoprene biosynthesis</keyword>
<keyword id="KW-0460">Magnesium</keyword>
<keyword id="KW-0479">Metal-binding</keyword>
<keyword id="KW-0521">NADP</keyword>
<name>IDI2_SACI6</name>
<sequence length="368" mass="40444">MPDIVNRKVEHVEIAAFENVDGLSSSTFLNDVILVHQGFPGISFSEINTKTKFFRKEISVPIMVTGMTGGRNELGRINKIIAEVTEKFGIPMGVGSQRVAIEKAEARESFAIVRKVAPTIPIIANLGMPQLVKGYGLKEFQDAIQMIEADAIAVHLNPAQEVFQPEGEPEYQIYALEKLRDISKELSVPIIVKESGNGISMETAKLLYSYGIKNFDTSGQGGTNWIAIEMIRDIRRGNWKAESAKNFLDWGVPTAASIMEVRYSVPDSFLVGSGGIRSGLDAAKAIALGADIAGMALPVLKSAIEGKESLEQFFRKIIFELKAAMMLTGSKDVNALKKTSIVILGKLKEWAEYRGINLSTYDKVRKRE</sequence>